<dbReference type="EMBL" id="AY283176">
    <property type="protein sequence ID" value="AAP37038.1"/>
    <property type="molecule type" value="mRNA"/>
</dbReference>
<dbReference type="EMBL" id="CM004467">
    <property type="status" value="NOT_ANNOTATED_CDS"/>
    <property type="molecule type" value="Genomic_DNA"/>
</dbReference>
<dbReference type="EMBL" id="BC169439">
    <property type="protein sequence ID" value="AAI69439.1"/>
    <property type="molecule type" value="mRNA"/>
</dbReference>
<dbReference type="RefSeq" id="NP_001083958.1">
    <property type="nucleotide sequence ID" value="NM_001090489.1"/>
</dbReference>
<dbReference type="BioGRID" id="100536">
    <property type="interactions" value="2"/>
</dbReference>
<dbReference type="IntAct" id="Q7T3U0">
    <property type="interactions" value="1"/>
</dbReference>
<dbReference type="GeneID" id="399211"/>
<dbReference type="KEGG" id="xla:399211"/>
<dbReference type="AGR" id="Xenbase:XB-GENE-942430"/>
<dbReference type="CTD" id="399211"/>
<dbReference type="Xenbase" id="XB-GENE-942430">
    <property type="gene designation" value="zar1.S"/>
</dbReference>
<dbReference type="OrthoDB" id="9885288at2759"/>
<dbReference type="CD-CODE" id="78E86D56">
    <property type="entry name" value="Mitochondrial cloud"/>
</dbReference>
<dbReference type="Proteomes" id="UP000186698">
    <property type="component" value="Chromosome 1S"/>
</dbReference>
<dbReference type="Proteomes" id="UP000694892">
    <property type="component" value="Chromosome 1S"/>
</dbReference>
<dbReference type="Bgee" id="399211">
    <property type="expression patterns" value="Expressed in oocyte and 6 other cell types or tissues"/>
</dbReference>
<dbReference type="GO" id="GO:0005737">
    <property type="term" value="C:cytoplasm"/>
    <property type="evidence" value="ECO:0000318"/>
    <property type="project" value="GO_Central"/>
</dbReference>
<dbReference type="GO" id="GO:0036464">
    <property type="term" value="C:cytoplasmic ribonucleoprotein granule"/>
    <property type="evidence" value="ECO:0007669"/>
    <property type="project" value="UniProtKB-SubCell"/>
</dbReference>
<dbReference type="GO" id="GO:0003730">
    <property type="term" value="F:mRNA 3'-UTR binding"/>
    <property type="evidence" value="ECO:0000314"/>
    <property type="project" value="UniProtKB"/>
</dbReference>
<dbReference type="GO" id="GO:0008270">
    <property type="term" value="F:zinc ion binding"/>
    <property type="evidence" value="ECO:0007669"/>
    <property type="project" value="UniProtKB-KW"/>
</dbReference>
<dbReference type="GO" id="GO:0017148">
    <property type="term" value="P:negative regulation of translation"/>
    <property type="evidence" value="ECO:0000314"/>
    <property type="project" value="UniProtKB"/>
</dbReference>
<dbReference type="GO" id="GO:0001556">
    <property type="term" value="P:oocyte maturation"/>
    <property type="evidence" value="ECO:0000314"/>
    <property type="project" value="UniProtKB"/>
</dbReference>
<dbReference type="GO" id="GO:0006412">
    <property type="term" value="P:translation"/>
    <property type="evidence" value="ECO:0000318"/>
    <property type="project" value="GO_Central"/>
</dbReference>
<dbReference type="InterPro" id="IPR026775">
    <property type="entry name" value="Zar1"/>
</dbReference>
<dbReference type="InterPro" id="IPR027377">
    <property type="entry name" value="ZAR1/RTP1-5-like_Znf-3CxxC"/>
</dbReference>
<dbReference type="PANTHER" id="PTHR31054:SF6">
    <property type="entry name" value="ZYGOTE ARREST PROTEIN 1"/>
    <property type="match status" value="1"/>
</dbReference>
<dbReference type="PANTHER" id="PTHR31054">
    <property type="entry name" value="ZYGOTE ARREST PROTEIN 1-LIKE ISOFORM X1"/>
    <property type="match status" value="1"/>
</dbReference>
<dbReference type="Pfam" id="PF13695">
    <property type="entry name" value="Zn_ribbon_3CxxC"/>
    <property type="match status" value="1"/>
</dbReference>
<dbReference type="SMART" id="SM01328">
    <property type="entry name" value="zf-3CxxC"/>
    <property type="match status" value="1"/>
</dbReference>
<evidence type="ECO:0000250" key="1">
    <source>
        <dbReference type="UniProtKB" id="C3VD30"/>
    </source>
</evidence>
<evidence type="ECO:0000250" key="2">
    <source>
        <dbReference type="UniProtKB" id="Q80SU3"/>
    </source>
</evidence>
<evidence type="ECO:0000255" key="3"/>
<evidence type="ECO:0000256" key="4">
    <source>
        <dbReference type="SAM" id="MobiDB-lite"/>
    </source>
</evidence>
<evidence type="ECO:0000269" key="5">
    <source>
    </source>
</evidence>
<evidence type="ECO:0000269" key="6">
    <source>
    </source>
</evidence>
<evidence type="ECO:0000303" key="7">
    <source>
    </source>
</evidence>
<evidence type="ECO:0000305" key="8"/>
<comment type="function">
    <text evidence="2 6">mRNA-binding protein required for maternal mRNA storage, translation and degradation during oocyte maturation (PubMed:23827238). Probably promotes formation of some phase-separated membraneless compartment that stores maternal mRNAs in oocytes: acts by undergoing liquid-liquid phase separation upon binding to maternal mRNAs (By similarity). Binds to the 3'-UTR of maternal mRNAs in immature oocytes, inhibiting their translation (PubMed:23827238).</text>
</comment>
<comment type="subcellular location">
    <subcellularLocation>
        <location evidence="1">Cytoplasm</location>
        <location evidence="1">Cytoplasmic ribonucleoprotein granule</location>
    </subcellularLocation>
</comment>
<comment type="tissue specificity">
    <text evidence="5 6">Ovary (PubMed:12773403, PubMed:23827238). Also expressed in lung and muscle (PubMed:12773403).</text>
</comment>
<comment type="developmental stage">
    <text evidence="6">Expressed during oocyte maturation: reaches maximum levels at stages I-III and then declined through stages IV to VI (PubMed:23827238). During oocyte maturation, levels remain constant (PubMed:23827238).</text>
</comment>
<comment type="domain">
    <text evidence="2">Disordered regions undergo liquid-liquid phase separation (LLPS) for the formation of membraneless compartments that store maternal mRNAs in oocytes.</text>
</comment>
<comment type="domain">
    <text evidence="6">The 3CxxC-type mediates binding to the 3'-UTR of mRNAs.</text>
</comment>
<comment type="similarity">
    <text evidence="8">Belongs to the ZAR1 family.</text>
</comment>
<gene>
    <name type="primary">zar1.S</name>
    <name evidence="7" type="synonym">zar1</name>
</gene>
<name>ZAR1S_XENLA</name>
<organism>
    <name type="scientific">Xenopus laevis</name>
    <name type="common">African clawed frog</name>
    <dbReference type="NCBI Taxonomy" id="8355"/>
    <lineage>
        <taxon>Eukaryota</taxon>
        <taxon>Metazoa</taxon>
        <taxon>Chordata</taxon>
        <taxon>Craniata</taxon>
        <taxon>Vertebrata</taxon>
        <taxon>Euteleostomi</taxon>
        <taxon>Amphibia</taxon>
        <taxon>Batrachia</taxon>
        <taxon>Anura</taxon>
        <taxon>Pipoidea</taxon>
        <taxon>Pipidae</taxon>
        <taxon>Xenopodinae</taxon>
        <taxon>Xenopus</taxon>
        <taxon>Xenopus</taxon>
    </lineage>
</organism>
<feature type="chain" id="PRO_0000187016" description="Zygote arrest protein 1.S">
    <location>
        <begin position="1"/>
        <end position="295"/>
    </location>
</feature>
<feature type="zinc finger region" description="3CxxC-type" evidence="3">
    <location>
        <begin position="197"/>
        <end position="280"/>
    </location>
</feature>
<feature type="region of interest" description="Disordered" evidence="4">
    <location>
        <begin position="80"/>
        <end position="115"/>
    </location>
</feature>
<feature type="region of interest" description="Disordered" evidence="4">
    <location>
        <begin position="144"/>
        <end position="186"/>
    </location>
</feature>
<feature type="compositionally biased region" description="Basic and acidic residues" evidence="4">
    <location>
        <begin position="144"/>
        <end position="176"/>
    </location>
</feature>
<feature type="mutagenesis site" description="Abolished binding to the 3'-UTR of mRNAs." evidence="6">
    <original>C</original>
    <variation>A</variation>
    <location>
        <position position="203"/>
    </location>
</feature>
<feature type="mutagenesis site" description="Abolished binding to the 3'-UTR of mRNAs." evidence="6">
    <original>C</original>
    <variation>A</variation>
    <location>
        <position position="230"/>
    </location>
</feature>
<feature type="mutagenesis site" description="Abolished binding to the 3'-UTR of mRNAs." evidence="6">
    <original>C</original>
    <variation>A</variation>
    <location>
        <position position="247"/>
    </location>
</feature>
<feature type="mutagenesis site" description="Abolished binding to the 3'-UTR of mRNAs." evidence="6">
    <original>C</original>
    <variation>A</variation>
    <location>
        <position position="275"/>
    </location>
</feature>
<protein>
    <recommendedName>
        <fullName evidence="8">Zygote arrest protein 1.S</fullName>
    </recommendedName>
</protein>
<proteinExistence type="evidence at protein level"/>
<sequence length="295" mass="33963">MYPAYNPYSYRYLNPRNKGMSWRQKNYLASYGDTGDYCDNYQRAQLKAILSQVNPNLTPRLCRANTRDVGVQVNPRQDASVQCSLGPRTLLRRRPGALRKPPPEQGSPASPTKTVRFPRTIAVYSPVAAGRLAPFQDEGVNLEEKGEAVRSEGSEGGRQEGKQGDGEIKEQMKMDKTDEEEAAPAQTRPKFQFLEQKYGYYHCKDCNIRWESAYVWCVQETNKVYFKQFCRTCQKSYNPYRVEDIMCQSCKQTRCACPVKLRHVDPKRPHRQDLCGRCKGKRLSCDSTFSFKYII</sequence>
<accession>Q7T3U0</accession>
<accession>B7ZPG0</accession>
<reference key="1">
    <citation type="journal article" date="2003" name="Biol. Reprod.">
        <title>Zygote arrest 1 (Zar1) is an evolutionarily conserved gene expressed in vertebrate ovaries.</title>
        <authorList>
            <person name="Wu X."/>
            <person name="Wang P."/>
            <person name="Brown C.A."/>
            <person name="Zilinski C.A."/>
            <person name="Matzuk M.M."/>
        </authorList>
    </citation>
    <scope>NUCLEOTIDE SEQUENCE [MRNA]</scope>
    <scope>TISSUE SPECIFICITY</scope>
    <source>
        <tissue>Ovary</tissue>
    </source>
</reference>
<reference key="2">
    <citation type="journal article" date="2016" name="Nature">
        <title>Genome evolution in the allotetraploid frog Xenopus laevis.</title>
        <authorList>
            <person name="Session A.M."/>
            <person name="Uno Y."/>
            <person name="Kwon T."/>
            <person name="Chapman J.A."/>
            <person name="Toyoda A."/>
            <person name="Takahashi S."/>
            <person name="Fukui A."/>
            <person name="Hikosaka A."/>
            <person name="Suzuki A."/>
            <person name="Kondo M."/>
            <person name="van Heeringen S.J."/>
            <person name="Quigley I."/>
            <person name="Heinz S."/>
            <person name="Ogino H."/>
            <person name="Ochi H."/>
            <person name="Hellsten U."/>
            <person name="Lyons J.B."/>
            <person name="Simakov O."/>
            <person name="Putnam N."/>
            <person name="Stites J."/>
            <person name="Kuroki Y."/>
            <person name="Tanaka T."/>
            <person name="Michiue T."/>
            <person name="Watanabe M."/>
            <person name="Bogdanovic O."/>
            <person name="Lister R."/>
            <person name="Georgiou G."/>
            <person name="Paranjpe S.S."/>
            <person name="van Kruijsbergen I."/>
            <person name="Shu S."/>
            <person name="Carlson J."/>
            <person name="Kinoshita T."/>
            <person name="Ohta Y."/>
            <person name="Mawaribuchi S."/>
            <person name="Jenkins J."/>
            <person name="Grimwood J."/>
            <person name="Schmutz J."/>
            <person name="Mitros T."/>
            <person name="Mozaffari S.V."/>
            <person name="Suzuki Y."/>
            <person name="Haramoto Y."/>
            <person name="Yamamoto T.S."/>
            <person name="Takagi C."/>
            <person name="Heald R."/>
            <person name="Miller K."/>
            <person name="Haudenschild C."/>
            <person name="Kitzman J."/>
            <person name="Nakayama T."/>
            <person name="Izutsu Y."/>
            <person name="Robert J."/>
            <person name="Fortriede J."/>
            <person name="Burns K."/>
            <person name="Lotay V."/>
            <person name="Karimi K."/>
            <person name="Yasuoka Y."/>
            <person name="Dichmann D.S."/>
            <person name="Flajnik M.F."/>
            <person name="Houston D.W."/>
            <person name="Shendure J."/>
            <person name="DuPasquier L."/>
            <person name="Vize P.D."/>
            <person name="Zorn A.M."/>
            <person name="Ito M."/>
            <person name="Marcotte E.M."/>
            <person name="Wallingford J.B."/>
            <person name="Ito Y."/>
            <person name="Asashima M."/>
            <person name="Ueno N."/>
            <person name="Matsuda Y."/>
            <person name="Veenstra G.J."/>
            <person name="Fujiyama A."/>
            <person name="Harland R.M."/>
            <person name="Taira M."/>
            <person name="Rokhsar D.S."/>
        </authorList>
    </citation>
    <scope>NUCLEOTIDE SEQUENCE [LARGE SCALE GENOMIC DNA]</scope>
    <source>
        <strain>J</strain>
    </source>
</reference>
<reference key="3">
    <citation type="submission" date="2008-11" db="EMBL/GenBank/DDBJ databases">
        <authorList>
            <consortium name="NIH - Xenopus Gene Collection (XGC) project"/>
        </authorList>
    </citation>
    <scope>NUCLEOTIDE SEQUENCE [LARGE SCALE MRNA]</scope>
    <source>
        <tissue>Gastrula</tissue>
    </source>
</reference>
<reference key="4">
    <citation type="journal article" date="2013" name="Biochim. Biophys. Acta">
        <title>Zar1 represses translation in Xenopus oocytes and binds to the TCS in maternal mRNAs with different characteristics than Zar2.</title>
        <authorList>
            <person name="Yamamoto T.M."/>
            <person name="Cook J.M."/>
            <person name="Kotter C.V."/>
            <person name="Khat T."/>
            <person name="Silva K.D."/>
            <person name="Ferreyros M."/>
            <person name="Holt J.W."/>
            <person name="Knight J.D."/>
            <person name="Charlesworth A."/>
        </authorList>
    </citation>
    <scope>FUNCTION</scope>
    <scope>TISSUE SPECIFICITY</scope>
    <scope>DEVELOPMENTAL STAGE</scope>
    <scope>DOMAIN</scope>
    <scope>MUTAGENESIS OF CYS-203; CYS-230; CYS-247 AND CYS-275</scope>
</reference>
<keyword id="KW-0963">Cytoplasm</keyword>
<keyword id="KW-0217">Developmental protein</keyword>
<keyword id="KW-0221">Differentiation</keyword>
<keyword id="KW-0479">Metal-binding</keyword>
<keyword id="KW-0896">Oogenesis</keyword>
<keyword id="KW-1185">Reference proteome</keyword>
<keyword id="KW-0694">RNA-binding</keyword>
<keyword id="KW-0862">Zinc</keyword>
<keyword id="KW-0863">Zinc-finger</keyword>